<organism>
    <name type="scientific">Geobacter sulfurreducens (strain ATCC 51573 / DSM 12127 / PCA)</name>
    <dbReference type="NCBI Taxonomy" id="243231"/>
    <lineage>
        <taxon>Bacteria</taxon>
        <taxon>Pseudomonadati</taxon>
        <taxon>Thermodesulfobacteriota</taxon>
        <taxon>Desulfuromonadia</taxon>
        <taxon>Geobacterales</taxon>
        <taxon>Geobacteraceae</taxon>
        <taxon>Geobacter</taxon>
    </lineage>
</organism>
<gene>
    <name evidence="1" type="primary">cas1</name>
    <name type="ordered locus">GSU1392</name>
</gene>
<reference key="1">
    <citation type="journal article" date="2003" name="Science">
        <title>Genome of Geobacter sulfurreducens: metal reduction in subsurface environments.</title>
        <authorList>
            <person name="Methe B.A."/>
            <person name="Nelson K.E."/>
            <person name="Eisen J.A."/>
            <person name="Paulsen I.T."/>
            <person name="Nelson W.C."/>
            <person name="Heidelberg J.F."/>
            <person name="Wu D."/>
            <person name="Wu M."/>
            <person name="Ward N.L."/>
            <person name="Beanan M.J."/>
            <person name="Dodson R.J."/>
            <person name="Madupu R."/>
            <person name="Brinkac L.M."/>
            <person name="Daugherty S.C."/>
            <person name="DeBoy R.T."/>
            <person name="Durkin A.S."/>
            <person name="Gwinn M.L."/>
            <person name="Kolonay J.F."/>
            <person name="Sullivan S.A."/>
            <person name="Haft D.H."/>
            <person name="Selengut J."/>
            <person name="Davidsen T.M."/>
            <person name="Zafar N."/>
            <person name="White O."/>
            <person name="Tran B."/>
            <person name="Romero C."/>
            <person name="Forberger H.A."/>
            <person name="Weidman J.F."/>
            <person name="Khouri H.M."/>
            <person name="Feldblyum T.V."/>
            <person name="Utterback T.R."/>
            <person name="Van Aken S.E."/>
            <person name="Lovley D.R."/>
            <person name="Fraser C.M."/>
        </authorList>
    </citation>
    <scope>NUCLEOTIDE SEQUENCE [LARGE SCALE GENOMIC DNA]</scope>
    <source>
        <strain>ATCC 51573 / DSM 12127 / PCA</strain>
    </source>
</reference>
<accession>Q74DC4</accession>
<protein>
    <recommendedName>
        <fullName evidence="1">CRISPR-associated endonuclease Cas1</fullName>
        <ecNumber evidence="1">3.1.-.-</ecNumber>
    </recommendedName>
</protein>
<name>CAS1_GEOSL</name>
<keyword id="KW-0051">Antiviral defense</keyword>
<keyword id="KW-0238">DNA-binding</keyword>
<keyword id="KW-0255">Endonuclease</keyword>
<keyword id="KW-0378">Hydrolase</keyword>
<keyword id="KW-0460">Magnesium</keyword>
<keyword id="KW-0464">Manganese</keyword>
<keyword id="KW-0479">Metal-binding</keyword>
<keyword id="KW-0540">Nuclease</keyword>
<keyword id="KW-1185">Reference proteome</keyword>
<feature type="chain" id="PRO_0000417078" description="CRISPR-associated endonuclease Cas1">
    <location>
        <begin position="1"/>
        <end position="306"/>
    </location>
</feature>
<feature type="binding site" evidence="1">
    <location>
        <position position="143"/>
    </location>
    <ligand>
        <name>Mn(2+)</name>
        <dbReference type="ChEBI" id="CHEBI:29035"/>
    </ligand>
</feature>
<feature type="binding site" evidence="1">
    <location>
        <position position="210"/>
    </location>
    <ligand>
        <name>Mn(2+)</name>
        <dbReference type="ChEBI" id="CHEBI:29035"/>
    </ligand>
</feature>
<feature type="binding site" evidence="1">
    <location>
        <position position="223"/>
    </location>
    <ligand>
        <name>Mn(2+)</name>
        <dbReference type="ChEBI" id="CHEBI:29035"/>
    </ligand>
</feature>
<dbReference type="EC" id="3.1.-.-" evidence="1"/>
<dbReference type="EMBL" id="AE017180">
    <property type="protein sequence ID" value="AAR34768.1"/>
    <property type="molecule type" value="Genomic_DNA"/>
</dbReference>
<dbReference type="RefSeq" id="NP_952445.1">
    <property type="nucleotide sequence ID" value="NC_002939.5"/>
</dbReference>
<dbReference type="RefSeq" id="WP_010942041.1">
    <property type="nucleotide sequence ID" value="NC_002939.5"/>
</dbReference>
<dbReference type="SMR" id="Q74DC4"/>
<dbReference type="FunCoup" id="Q74DC4">
    <property type="interactions" value="28"/>
</dbReference>
<dbReference type="STRING" id="243231.GSU1392"/>
<dbReference type="EnsemblBacteria" id="AAR34768">
    <property type="protein sequence ID" value="AAR34768"/>
    <property type="gene ID" value="GSU1392"/>
</dbReference>
<dbReference type="KEGG" id="gsu:GSU1392"/>
<dbReference type="PATRIC" id="fig|243231.5.peg.1388"/>
<dbReference type="eggNOG" id="COG1518">
    <property type="taxonomic scope" value="Bacteria"/>
</dbReference>
<dbReference type="HOGENOM" id="CLU_077904_0_0_7"/>
<dbReference type="InParanoid" id="Q74DC4"/>
<dbReference type="OrthoDB" id="9777847at2"/>
<dbReference type="Proteomes" id="UP000000577">
    <property type="component" value="Chromosome"/>
</dbReference>
<dbReference type="GO" id="GO:0003677">
    <property type="term" value="F:DNA binding"/>
    <property type="evidence" value="ECO:0007669"/>
    <property type="project" value="UniProtKB-KW"/>
</dbReference>
<dbReference type="GO" id="GO:0004520">
    <property type="term" value="F:DNA endonuclease activity"/>
    <property type="evidence" value="ECO:0007669"/>
    <property type="project" value="InterPro"/>
</dbReference>
<dbReference type="GO" id="GO:0004519">
    <property type="term" value="F:endonuclease activity"/>
    <property type="evidence" value="ECO:0000318"/>
    <property type="project" value="GO_Central"/>
</dbReference>
<dbReference type="GO" id="GO:0046872">
    <property type="term" value="F:metal ion binding"/>
    <property type="evidence" value="ECO:0007669"/>
    <property type="project" value="UniProtKB-UniRule"/>
</dbReference>
<dbReference type="GO" id="GO:0099048">
    <property type="term" value="P:CRISPR-cas system"/>
    <property type="evidence" value="ECO:0000318"/>
    <property type="project" value="GO_Central"/>
</dbReference>
<dbReference type="GO" id="GO:0051607">
    <property type="term" value="P:defense response to virus"/>
    <property type="evidence" value="ECO:0007669"/>
    <property type="project" value="UniProtKB-UniRule"/>
</dbReference>
<dbReference type="GO" id="GO:0043571">
    <property type="term" value="P:maintenance of CRISPR repeat elements"/>
    <property type="evidence" value="ECO:0000318"/>
    <property type="project" value="GO_Central"/>
</dbReference>
<dbReference type="CDD" id="cd09719">
    <property type="entry name" value="Cas1_I-E"/>
    <property type="match status" value="1"/>
</dbReference>
<dbReference type="Gene3D" id="1.20.120.920">
    <property type="entry name" value="CRISPR-associated endonuclease Cas1, C-terminal domain"/>
    <property type="match status" value="1"/>
</dbReference>
<dbReference type="Gene3D" id="3.100.10.20">
    <property type="entry name" value="CRISPR-associated endonuclease Cas1, N-terminal domain"/>
    <property type="match status" value="1"/>
</dbReference>
<dbReference type="HAMAP" id="MF_01470">
    <property type="entry name" value="Cas1"/>
    <property type="match status" value="1"/>
</dbReference>
<dbReference type="InterPro" id="IPR050646">
    <property type="entry name" value="Cas1"/>
</dbReference>
<dbReference type="InterPro" id="IPR033641">
    <property type="entry name" value="Cas1_I-E"/>
</dbReference>
<dbReference type="InterPro" id="IPR002729">
    <property type="entry name" value="CRISPR-assoc_Cas1"/>
</dbReference>
<dbReference type="InterPro" id="IPR042206">
    <property type="entry name" value="CRISPR-assoc_Cas1_C"/>
</dbReference>
<dbReference type="InterPro" id="IPR019851">
    <property type="entry name" value="CRISPR-assoc_Cas1_ECOLI"/>
</dbReference>
<dbReference type="InterPro" id="IPR042211">
    <property type="entry name" value="CRISPR-assoc_Cas1_N"/>
</dbReference>
<dbReference type="NCBIfam" id="TIGR00287">
    <property type="entry name" value="cas1"/>
    <property type="match status" value="1"/>
</dbReference>
<dbReference type="NCBIfam" id="TIGR03638">
    <property type="entry name" value="cas1_ECOLI"/>
    <property type="match status" value="1"/>
</dbReference>
<dbReference type="PANTHER" id="PTHR34353:SF3">
    <property type="entry name" value="CRISPR-ASSOCIATED ENDONUCLEASE CAS1"/>
    <property type="match status" value="1"/>
</dbReference>
<dbReference type="PANTHER" id="PTHR34353">
    <property type="entry name" value="CRISPR-ASSOCIATED ENDONUCLEASE CAS1 1"/>
    <property type="match status" value="1"/>
</dbReference>
<dbReference type="Pfam" id="PF01867">
    <property type="entry name" value="Cas_Cas1"/>
    <property type="match status" value="1"/>
</dbReference>
<sequence>MQPQLPPLKPIPIKDRISVLYVERGNLDVLDGAFVVVDKTGVRTHLPVGGVACLMLEPGTRVSHAAVTLASRIGCLLVWIGEAGVRLYASGQPGGARADRLLYQAKLALDDSARLKVVRKMYALRFREEPPERRSVEQLRGIEGVRVRKMYELLARQHGVAWKARNYDHTQWESGDVPNRCLSSATACLYGICEAAILAAGYAPAVGFIHTGKPQSFVYDIADIFKFETVVPVAFRIAAKKPRDPEREVRLACRDAFRQSKILHRIIPTIEQVLAAGGMDVPTPPPESVEAVIPNKEGIGDAGHRG</sequence>
<evidence type="ECO:0000255" key="1">
    <source>
        <dbReference type="HAMAP-Rule" id="MF_01470"/>
    </source>
</evidence>
<comment type="function">
    <text evidence="1">CRISPR (clustered regularly interspaced short palindromic repeat), is an adaptive immune system that provides protection against mobile genetic elements (viruses, transposable elements and conjugative plasmids). CRISPR clusters contain spacers, sequences complementary to antecedent mobile elements, and target invading nucleic acids. CRISPR clusters are transcribed and processed into CRISPR RNA (crRNA). Acts as a dsDNA endonuclease. Involved in the integration of spacer DNA into the CRISPR cassette.</text>
</comment>
<comment type="cofactor">
    <cofactor evidence="1">
        <name>Mg(2+)</name>
        <dbReference type="ChEBI" id="CHEBI:18420"/>
    </cofactor>
    <cofactor evidence="1">
        <name>Mn(2+)</name>
        <dbReference type="ChEBI" id="CHEBI:29035"/>
    </cofactor>
</comment>
<comment type="subunit">
    <text evidence="1">Homodimer, forms a heterotetramer with a Cas2 homodimer.</text>
</comment>
<comment type="similarity">
    <text evidence="1">Belongs to the CRISPR-associated endonuclease Cas1 family.</text>
</comment>
<proteinExistence type="inferred from homology"/>